<gene>
    <name evidence="1" type="primary">carA</name>
</gene>
<organism>
    <name type="scientific">Pyropia yezoensis</name>
    <name type="common">Susabi-nori</name>
    <name type="synonym">Porphyra yezoensis</name>
    <dbReference type="NCBI Taxonomy" id="2788"/>
    <lineage>
        <taxon>Eukaryota</taxon>
        <taxon>Rhodophyta</taxon>
        <taxon>Bangiophyceae</taxon>
        <taxon>Bangiales</taxon>
        <taxon>Bangiaceae</taxon>
        <taxon>Pyropia</taxon>
    </lineage>
</organism>
<dbReference type="EC" id="6.3.5.5" evidence="1"/>
<dbReference type="EMBL" id="AP006715">
    <property type="protein sequence ID" value="BAE92325.1"/>
    <property type="molecule type" value="Genomic_DNA"/>
</dbReference>
<dbReference type="RefSeq" id="YP_536882.1">
    <property type="nucleotide sequence ID" value="NC_007932.1"/>
</dbReference>
<dbReference type="SMR" id="Q1XDT6"/>
<dbReference type="GeneID" id="3978841"/>
<dbReference type="UniPathway" id="UPA00068">
    <property type="reaction ID" value="UER00171"/>
</dbReference>
<dbReference type="UniPathway" id="UPA00070">
    <property type="reaction ID" value="UER00115"/>
</dbReference>
<dbReference type="GO" id="GO:0009507">
    <property type="term" value="C:chloroplast"/>
    <property type="evidence" value="ECO:0007669"/>
    <property type="project" value="UniProtKB-SubCell"/>
</dbReference>
<dbReference type="GO" id="GO:0005524">
    <property type="term" value="F:ATP binding"/>
    <property type="evidence" value="ECO:0007669"/>
    <property type="project" value="UniProtKB-UniRule"/>
</dbReference>
<dbReference type="GO" id="GO:0004088">
    <property type="term" value="F:carbamoyl-phosphate synthase (glutamine-hydrolyzing) activity"/>
    <property type="evidence" value="ECO:0007669"/>
    <property type="project" value="UniProtKB-UniRule"/>
</dbReference>
<dbReference type="GO" id="GO:0004359">
    <property type="term" value="F:glutaminase activity"/>
    <property type="evidence" value="ECO:0007669"/>
    <property type="project" value="RHEA"/>
</dbReference>
<dbReference type="GO" id="GO:0006207">
    <property type="term" value="P:'de novo' pyrimidine nucleobase biosynthetic process"/>
    <property type="evidence" value="ECO:0007669"/>
    <property type="project" value="InterPro"/>
</dbReference>
<dbReference type="GO" id="GO:0044205">
    <property type="term" value="P:'de novo' UMP biosynthetic process"/>
    <property type="evidence" value="ECO:0007669"/>
    <property type="project" value="UniProtKB-UniRule"/>
</dbReference>
<dbReference type="GO" id="GO:0006541">
    <property type="term" value="P:glutamine metabolic process"/>
    <property type="evidence" value="ECO:0007669"/>
    <property type="project" value="InterPro"/>
</dbReference>
<dbReference type="GO" id="GO:0006526">
    <property type="term" value="P:L-arginine biosynthetic process"/>
    <property type="evidence" value="ECO:0007669"/>
    <property type="project" value="UniProtKB-UniRule"/>
</dbReference>
<dbReference type="CDD" id="cd01744">
    <property type="entry name" value="GATase1_CPSase"/>
    <property type="match status" value="1"/>
</dbReference>
<dbReference type="FunFam" id="3.50.30.20:FF:000001">
    <property type="entry name" value="Carbamoyl-phosphate synthase small chain"/>
    <property type="match status" value="1"/>
</dbReference>
<dbReference type="Gene3D" id="3.40.50.880">
    <property type="match status" value="1"/>
</dbReference>
<dbReference type="Gene3D" id="3.50.30.20">
    <property type="entry name" value="Carbamoyl-phosphate synthase small subunit, N-terminal domain"/>
    <property type="match status" value="1"/>
</dbReference>
<dbReference type="HAMAP" id="MF_01209">
    <property type="entry name" value="CPSase_S_chain"/>
    <property type="match status" value="1"/>
</dbReference>
<dbReference type="InterPro" id="IPR050472">
    <property type="entry name" value="Anth_synth/Amidotransfase"/>
</dbReference>
<dbReference type="InterPro" id="IPR006274">
    <property type="entry name" value="CarbamoylP_synth_ssu"/>
</dbReference>
<dbReference type="InterPro" id="IPR002474">
    <property type="entry name" value="CarbamoylP_synth_ssu_N"/>
</dbReference>
<dbReference type="InterPro" id="IPR036480">
    <property type="entry name" value="CarbP_synth_ssu_N_sf"/>
</dbReference>
<dbReference type="InterPro" id="IPR029062">
    <property type="entry name" value="Class_I_gatase-like"/>
</dbReference>
<dbReference type="InterPro" id="IPR035686">
    <property type="entry name" value="CPSase_GATase1"/>
</dbReference>
<dbReference type="InterPro" id="IPR017926">
    <property type="entry name" value="GATASE"/>
</dbReference>
<dbReference type="NCBIfam" id="TIGR01368">
    <property type="entry name" value="CPSaseIIsmall"/>
    <property type="match status" value="1"/>
</dbReference>
<dbReference type="NCBIfam" id="NF009475">
    <property type="entry name" value="PRK12838.1"/>
    <property type="match status" value="1"/>
</dbReference>
<dbReference type="PANTHER" id="PTHR43418:SF7">
    <property type="entry name" value="CARBAMOYL-PHOSPHATE SYNTHASE SMALL CHAIN"/>
    <property type="match status" value="1"/>
</dbReference>
<dbReference type="PANTHER" id="PTHR43418">
    <property type="entry name" value="MULTIFUNCTIONAL TRYPTOPHAN BIOSYNTHESIS PROTEIN-RELATED"/>
    <property type="match status" value="1"/>
</dbReference>
<dbReference type="Pfam" id="PF00988">
    <property type="entry name" value="CPSase_sm_chain"/>
    <property type="match status" value="1"/>
</dbReference>
<dbReference type="Pfam" id="PF00117">
    <property type="entry name" value="GATase"/>
    <property type="match status" value="1"/>
</dbReference>
<dbReference type="PRINTS" id="PR00097">
    <property type="entry name" value="ANTSNTHASEII"/>
</dbReference>
<dbReference type="PRINTS" id="PR00099">
    <property type="entry name" value="CPSGATASE"/>
</dbReference>
<dbReference type="PRINTS" id="PR00096">
    <property type="entry name" value="GATASE"/>
</dbReference>
<dbReference type="SMART" id="SM01097">
    <property type="entry name" value="CPSase_sm_chain"/>
    <property type="match status" value="1"/>
</dbReference>
<dbReference type="SUPFAM" id="SSF52021">
    <property type="entry name" value="Carbamoyl phosphate synthetase, small subunit N-terminal domain"/>
    <property type="match status" value="1"/>
</dbReference>
<dbReference type="SUPFAM" id="SSF52317">
    <property type="entry name" value="Class I glutamine amidotransferase-like"/>
    <property type="match status" value="1"/>
</dbReference>
<dbReference type="PROSITE" id="PS51273">
    <property type="entry name" value="GATASE_TYPE_1"/>
    <property type="match status" value="1"/>
</dbReference>
<geneLocation type="chloroplast"/>
<comment type="function">
    <text evidence="1">Small subunit of the glutamine-dependent carbamoyl phosphate synthetase (CPSase). CPSase catalyzes the formation of carbamoyl phosphate from the ammonia moiety of glutamine, carbonate, and phosphate donated by ATP, constituting the first step of 2 biosynthetic pathways, one leading to arginine and/or urea and the other to pyrimidine nucleotides. The small subunit (glutamine amidotransferase) binds and cleaves glutamine to supply the large subunit with the substrate ammonia.</text>
</comment>
<comment type="catalytic activity">
    <reaction evidence="1">
        <text>hydrogencarbonate + L-glutamine + 2 ATP + H2O = carbamoyl phosphate + L-glutamate + 2 ADP + phosphate + 2 H(+)</text>
        <dbReference type="Rhea" id="RHEA:18633"/>
        <dbReference type="ChEBI" id="CHEBI:15377"/>
        <dbReference type="ChEBI" id="CHEBI:15378"/>
        <dbReference type="ChEBI" id="CHEBI:17544"/>
        <dbReference type="ChEBI" id="CHEBI:29985"/>
        <dbReference type="ChEBI" id="CHEBI:30616"/>
        <dbReference type="ChEBI" id="CHEBI:43474"/>
        <dbReference type="ChEBI" id="CHEBI:58228"/>
        <dbReference type="ChEBI" id="CHEBI:58359"/>
        <dbReference type="ChEBI" id="CHEBI:456216"/>
        <dbReference type="EC" id="6.3.5.5"/>
    </reaction>
</comment>
<comment type="catalytic activity">
    <molecule>Carbamoyl phosphate synthase small chain</molecule>
    <reaction evidence="1">
        <text>L-glutamine + H2O = L-glutamate + NH4(+)</text>
        <dbReference type="Rhea" id="RHEA:15889"/>
        <dbReference type="ChEBI" id="CHEBI:15377"/>
        <dbReference type="ChEBI" id="CHEBI:28938"/>
        <dbReference type="ChEBI" id="CHEBI:29985"/>
        <dbReference type="ChEBI" id="CHEBI:58359"/>
    </reaction>
</comment>
<comment type="pathway">
    <text evidence="1">Amino-acid biosynthesis; L-arginine biosynthesis; carbamoyl phosphate from bicarbonate: step 1/1.</text>
</comment>
<comment type="pathway">
    <text evidence="1">Pyrimidine metabolism; UMP biosynthesis via de novo pathway; (S)-dihydroorotate from bicarbonate: step 1/3.</text>
</comment>
<comment type="subunit">
    <text evidence="1">Composed of two chains; the small (or glutamine) chain promotes the hydrolysis of glutamine to ammonia, which is used by the large (or ammonia) chain to synthesize carbamoyl phosphate. Tetramer of heterodimers (alpha,beta)4.</text>
</comment>
<comment type="subcellular location">
    <subcellularLocation>
        <location evidence="1">Plastid</location>
        <location evidence="1">Chloroplast</location>
    </subcellularLocation>
</comment>
<comment type="similarity">
    <text evidence="1">Belongs to the CarA family.</text>
</comment>
<proteinExistence type="inferred from homology"/>
<keyword id="KW-0028">Amino-acid biosynthesis</keyword>
<keyword id="KW-0055">Arginine biosynthesis</keyword>
<keyword id="KW-0067">ATP-binding</keyword>
<keyword id="KW-0150">Chloroplast</keyword>
<keyword id="KW-0315">Glutamine amidotransferase</keyword>
<keyword id="KW-0436">Ligase</keyword>
<keyword id="KW-0547">Nucleotide-binding</keyword>
<keyword id="KW-0934">Plastid</keyword>
<keyword id="KW-0665">Pyrimidine biosynthesis</keyword>
<name>CARA_PYRYE</name>
<protein>
    <recommendedName>
        <fullName evidence="1">Carbamoyl phosphate synthase small chain</fullName>
        <ecNumber evidence="1">6.3.5.5</ecNumber>
    </recommendedName>
    <alternativeName>
        <fullName evidence="1">Carbamoyl phosphate synthetase glutamine chain</fullName>
    </alternativeName>
</protein>
<sequence>MMKRIPAILVLEDGAYYKGWSFQQDKQEITIGEVVFNTGMTGYQEIITDPSYFHQIVAFTYPEIGNTGINNQDIESHSISIKGLIAKNICKISSSWREQQSLVKYLSSNNIPFIFGIDTRSLTQYLRQFGTMNGCISTDNLNHSYLKQKICEIPSMQGLDLIPHVTTRNVYPWDEKSFPNWYLTDNIRVHRVIQLKVIVIDFGVKLNILRRLATLGCQITVVPAHTPLKDILAYQPDGILLSNGPGDPSAVHYGIQTVTNLLDYNVPIFGICMGHQILNLALKAKTFKLKFGHRGINHPSGLNQQVEITSQNHGFAVELTSVFESPVRVTHFNLNDTTIAGTGHNQSPYFSVQYHPESSPGPHDADYLFESFIEIMTKSKNKVS</sequence>
<accession>Q1XDT6</accession>
<feature type="chain" id="PRO_0000275229" description="Carbamoyl phosphate synthase small chain">
    <location>
        <begin position="1"/>
        <end position="384"/>
    </location>
</feature>
<feature type="domain" description="Glutamine amidotransferase type-1" evidence="1">
    <location>
        <begin position="196"/>
        <end position="382"/>
    </location>
</feature>
<feature type="region of interest" description="CPSase" evidence="1">
    <location>
        <begin position="1"/>
        <end position="192"/>
    </location>
</feature>
<feature type="active site" description="Nucleophile" evidence="1">
    <location>
        <position position="272"/>
    </location>
</feature>
<feature type="active site" evidence="1">
    <location>
        <position position="355"/>
    </location>
</feature>
<feature type="active site" evidence="1">
    <location>
        <position position="357"/>
    </location>
</feature>
<feature type="binding site" evidence="1">
    <location>
        <position position="51"/>
    </location>
    <ligand>
        <name>L-glutamine</name>
        <dbReference type="ChEBI" id="CHEBI:58359"/>
    </ligand>
</feature>
<feature type="binding site" evidence="1">
    <location>
        <position position="244"/>
    </location>
    <ligand>
        <name>L-glutamine</name>
        <dbReference type="ChEBI" id="CHEBI:58359"/>
    </ligand>
</feature>
<feature type="binding site" evidence="1">
    <location>
        <position position="246"/>
    </location>
    <ligand>
        <name>L-glutamine</name>
        <dbReference type="ChEBI" id="CHEBI:58359"/>
    </ligand>
</feature>
<feature type="binding site" evidence="1">
    <location>
        <position position="273"/>
    </location>
    <ligand>
        <name>L-glutamine</name>
        <dbReference type="ChEBI" id="CHEBI:58359"/>
    </ligand>
</feature>
<feature type="binding site" evidence="1">
    <location>
        <position position="276"/>
    </location>
    <ligand>
        <name>L-glutamine</name>
        <dbReference type="ChEBI" id="CHEBI:58359"/>
    </ligand>
</feature>
<feature type="binding site" evidence="1">
    <location>
        <position position="312"/>
    </location>
    <ligand>
        <name>L-glutamine</name>
        <dbReference type="ChEBI" id="CHEBI:58359"/>
    </ligand>
</feature>
<feature type="binding site" evidence="1">
    <location>
        <position position="314"/>
    </location>
    <ligand>
        <name>L-glutamine</name>
        <dbReference type="ChEBI" id="CHEBI:58359"/>
    </ligand>
</feature>
<feature type="binding site" evidence="1">
    <location>
        <position position="315"/>
    </location>
    <ligand>
        <name>L-glutamine</name>
        <dbReference type="ChEBI" id="CHEBI:58359"/>
    </ligand>
</feature>
<evidence type="ECO:0000255" key="1">
    <source>
        <dbReference type="HAMAP-Rule" id="MF_01209"/>
    </source>
</evidence>
<reference key="1">
    <citation type="submission" date="2003-11" db="EMBL/GenBank/DDBJ databases">
        <title>Whole genome sequence of Porphyra yezoensis chloroplast.</title>
        <authorList>
            <person name="Kunimoto M."/>
            <person name="Morishima K."/>
            <person name="Yoshikawa M."/>
            <person name="Fukuda S."/>
            <person name="Kobayashi T."/>
            <person name="Kobayashi M."/>
            <person name="Okazaki T."/>
            <person name="Ohara I."/>
            <person name="Nakayama I."/>
        </authorList>
    </citation>
    <scope>NUCLEOTIDE SEQUENCE [LARGE SCALE GENOMIC DNA]</scope>
    <source>
        <strain>U-51</strain>
    </source>
</reference>